<comment type="function">
    <text evidence="1">Component of the cytochrome b6-f complex, which mediates electron transfer between photosystem II (PSII) and photosystem I (PSI), cyclic electron flow around PSI, and state transitions. PetG is required for either the stability or assembly of the cytochrome b6-f complex.</text>
</comment>
<comment type="subunit">
    <text evidence="1">The 4 large subunits of the cytochrome b6-f complex are cytochrome b6, subunit IV (17 kDa polypeptide, PetD), cytochrome f and the Rieske protein, while the 4 small subunits are PetG, PetL, PetM and PetN. The complex functions as a dimer.</text>
</comment>
<comment type="subcellular location">
    <subcellularLocation>
        <location evidence="1">Plastid</location>
        <location evidence="1">Chloroplast thylakoid membrane</location>
        <topology evidence="1">Single-pass membrane protein</topology>
    </subcellularLocation>
</comment>
<comment type="similarity">
    <text evidence="1">Belongs to the PetG family.</text>
</comment>
<proteinExistence type="inferred from homology"/>
<organism>
    <name type="scientific">Tetradesmus obliquus</name>
    <name type="common">Green alga</name>
    <name type="synonym">Acutodesmus obliquus</name>
    <dbReference type="NCBI Taxonomy" id="3088"/>
    <lineage>
        <taxon>Eukaryota</taxon>
        <taxon>Viridiplantae</taxon>
        <taxon>Chlorophyta</taxon>
        <taxon>core chlorophytes</taxon>
        <taxon>Chlorophyceae</taxon>
        <taxon>CS clade</taxon>
        <taxon>Sphaeropleales</taxon>
        <taxon>Scenedesmaceae</taxon>
        <taxon>Tetradesmus</taxon>
    </lineage>
</organism>
<gene>
    <name evidence="1" type="primary">petG</name>
</gene>
<protein>
    <recommendedName>
        <fullName evidence="1">Cytochrome b6-f complex subunit 5</fullName>
    </recommendedName>
    <alternativeName>
        <fullName evidence="1">Cytochrome b6-f complex subunit PetG</fullName>
    </alternativeName>
    <alternativeName>
        <fullName evidence="1">Cytochrome b6-f complex subunit V</fullName>
    </alternativeName>
</protein>
<accession>Q1KVX1</accession>
<geneLocation type="chloroplast"/>
<feature type="chain" id="PRO_0000275506" description="Cytochrome b6-f complex subunit 5">
    <location>
        <begin position="1"/>
        <end position="37"/>
    </location>
</feature>
<feature type="transmembrane region" description="Helical" evidence="1">
    <location>
        <begin position="5"/>
        <end position="25"/>
    </location>
</feature>
<name>PETG_TETOB</name>
<reference key="1">
    <citation type="journal article" date="2006" name="BMC Evol. Biol.">
        <title>The complete chloroplast genome sequence of the chlorophycean green alga Scenedesmus obliquus reveals a compact gene organization and a biased distribution of genes on the two DNA strands.</title>
        <authorList>
            <person name="de Cambiaire J.-C."/>
            <person name="Otis C."/>
            <person name="Lemieux C."/>
            <person name="Turmel M."/>
        </authorList>
    </citation>
    <scope>NUCLEOTIDE SEQUENCE [LARGE SCALE GENOMIC DNA]</scope>
    <source>
        <strain>UTEX 393</strain>
    </source>
</reference>
<evidence type="ECO:0000255" key="1">
    <source>
        <dbReference type="HAMAP-Rule" id="MF_00432"/>
    </source>
</evidence>
<dbReference type="EMBL" id="DQ396875">
    <property type="protein sequence ID" value="ABD48235.1"/>
    <property type="molecule type" value="Genomic_DNA"/>
</dbReference>
<dbReference type="RefSeq" id="YP_635953.1">
    <property type="nucleotide sequence ID" value="NC_008101.1"/>
</dbReference>
<dbReference type="SMR" id="Q1KVX1"/>
<dbReference type="GeneID" id="4099820"/>
<dbReference type="GO" id="GO:0009535">
    <property type="term" value="C:chloroplast thylakoid membrane"/>
    <property type="evidence" value="ECO:0007669"/>
    <property type="project" value="UniProtKB-SubCell"/>
</dbReference>
<dbReference type="GO" id="GO:0009512">
    <property type="term" value="C:cytochrome b6f complex"/>
    <property type="evidence" value="ECO:0007669"/>
    <property type="project" value="InterPro"/>
</dbReference>
<dbReference type="GO" id="GO:0045158">
    <property type="term" value="F:electron transporter, transferring electrons within cytochrome b6/f complex of photosystem II activity"/>
    <property type="evidence" value="ECO:0007669"/>
    <property type="project" value="UniProtKB-UniRule"/>
</dbReference>
<dbReference type="GO" id="GO:0017004">
    <property type="term" value="P:cytochrome complex assembly"/>
    <property type="evidence" value="ECO:0007669"/>
    <property type="project" value="UniProtKB-UniRule"/>
</dbReference>
<dbReference type="GO" id="GO:0015979">
    <property type="term" value="P:photosynthesis"/>
    <property type="evidence" value="ECO:0007669"/>
    <property type="project" value="UniProtKB-KW"/>
</dbReference>
<dbReference type="HAMAP" id="MF_00432">
    <property type="entry name" value="Cytb6_f_PetG"/>
    <property type="match status" value="1"/>
</dbReference>
<dbReference type="InterPro" id="IPR003683">
    <property type="entry name" value="Cyt_6/f_cplx_su5"/>
</dbReference>
<dbReference type="InterPro" id="IPR036099">
    <property type="entry name" value="Cyt_6/f_cplx_su5_sf"/>
</dbReference>
<dbReference type="NCBIfam" id="NF001907">
    <property type="entry name" value="PRK00665.1"/>
    <property type="match status" value="1"/>
</dbReference>
<dbReference type="Pfam" id="PF02529">
    <property type="entry name" value="PetG"/>
    <property type="match status" value="1"/>
</dbReference>
<dbReference type="PIRSF" id="PIRSF000034">
    <property type="entry name" value="Cyt_b6-f_V"/>
    <property type="match status" value="1"/>
</dbReference>
<dbReference type="SUPFAM" id="SSF103446">
    <property type="entry name" value="PetG subunit of the cytochrome b6f complex"/>
    <property type="match status" value="1"/>
</dbReference>
<sequence>MVEPLLSGIVLGLVPVTIAGLFVTAYLQYRRGDQATW</sequence>
<keyword id="KW-0150">Chloroplast</keyword>
<keyword id="KW-0249">Electron transport</keyword>
<keyword id="KW-0472">Membrane</keyword>
<keyword id="KW-0602">Photosynthesis</keyword>
<keyword id="KW-0934">Plastid</keyword>
<keyword id="KW-0793">Thylakoid</keyword>
<keyword id="KW-0812">Transmembrane</keyword>
<keyword id="KW-1133">Transmembrane helix</keyword>
<keyword id="KW-0813">Transport</keyword>